<sequence>MAQPKRRWSKQRTHKHRANWKIEAPNLVECPQCHEMKLPHRVCPSCGYYKNRKVVNED</sequence>
<accession>A4XKH4</accession>
<dbReference type="EMBL" id="CP000679">
    <property type="protein sequence ID" value="ABP67409.1"/>
    <property type="molecule type" value="Genomic_DNA"/>
</dbReference>
<dbReference type="RefSeq" id="WP_011917343.1">
    <property type="nucleotide sequence ID" value="NC_009437.1"/>
</dbReference>
<dbReference type="SMR" id="A4XKH4"/>
<dbReference type="STRING" id="351627.Csac_1824"/>
<dbReference type="KEGG" id="csc:Csac_1824"/>
<dbReference type="eggNOG" id="COG0333">
    <property type="taxonomic scope" value="Bacteria"/>
</dbReference>
<dbReference type="HOGENOM" id="CLU_129084_1_3_9"/>
<dbReference type="OrthoDB" id="9812874at2"/>
<dbReference type="Proteomes" id="UP000000256">
    <property type="component" value="Chromosome"/>
</dbReference>
<dbReference type="GO" id="GO:0015934">
    <property type="term" value="C:large ribosomal subunit"/>
    <property type="evidence" value="ECO:0007669"/>
    <property type="project" value="InterPro"/>
</dbReference>
<dbReference type="GO" id="GO:0003735">
    <property type="term" value="F:structural constituent of ribosome"/>
    <property type="evidence" value="ECO:0007669"/>
    <property type="project" value="InterPro"/>
</dbReference>
<dbReference type="GO" id="GO:0006412">
    <property type="term" value="P:translation"/>
    <property type="evidence" value="ECO:0007669"/>
    <property type="project" value="UniProtKB-UniRule"/>
</dbReference>
<dbReference type="HAMAP" id="MF_00340">
    <property type="entry name" value="Ribosomal_bL32"/>
    <property type="match status" value="1"/>
</dbReference>
<dbReference type="InterPro" id="IPR002677">
    <property type="entry name" value="Ribosomal_bL32"/>
</dbReference>
<dbReference type="InterPro" id="IPR044957">
    <property type="entry name" value="Ribosomal_bL32_bact"/>
</dbReference>
<dbReference type="InterPro" id="IPR011332">
    <property type="entry name" value="Ribosomal_zn-bd"/>
</dbReference>
<dbReference type="NCBIfam" id="TIGR01031">
    <property type="entry name" value="rpmF_bact"/>
    <property type="match status" value="1"/>
</dbReference>
<dbReference type="PANTHER" id="PTHR35534">
    <property type="entry name" value="50S RIBOSOMAL PROTEIN L32"/>
    <property type="match status" value="1"/>
</dbReference>
<dbReference type="PANTHER" id="PTHR35534:SF1">
    <property type="entry name" value="LARGE RIBOSOMAL SUBUNIT PROTEIN BL32"/>
    <property type="match status" value="1"/>
</dbReference>
<dbReference type="Pfam" id="PF01783">
    <property type="entry name" value="Ribosomal_L32p"/>
    <property type="match status" value="1"/>
</dbReference>
<dbReference type="SUPFAM" id="SSF57829">
    <property type="entry name" value="Zn-binding ribosomal proteins"/>
    <property type="match status" value="1"/>
</dbReference>
<feature type="chain" id="PRO_1000005052" description="Large ribosomal subunit protein bL32">
    <location>
        <begin position="1"/>
        <end position="58"/>
    </location>
</feature>
<gene>
    <name evidence="1" type="primary">rpmF</name>
    <name type="ordered locus">Csac_1824</name>
</gene>
<protein>
    <recommendedName>
        <fullName evidence="1">Large ribosomal subunit protein bL32</fullName>
    </recommendedName>
    <alternativeName>
        <fullName evidence="2">50S ribosomal protein L32</fullName>
    </alternativeName>
</protein>
<reference key="1">
    <citation type="submission" date="2007-04" db="EMBL/GenBank/DDBJ databases">
        <title>Genome sequence of the thermophilic hydrogen-producing bacterium Caldicellulosiruptor saccharolyticus DSM 8903.</title>
        <authorList>
            <person name="Copeland A."/>
            <person name="Lucas S."/>
            <person name="Lapidus A."/>
            <person name="Barry K."/>
            <person name="Detter J.C."/>
            <person name="Glavina del Rio T."/>
            <person name="Hammon N."/>
            <person name="Israni S."/>
            <person name="Dalin E."/>
            <person name="Tice H."/>
            <person name="Pitluck S."/>
            <person name="Kiss H."/>
            <person name="Brettin T."/>
            <person name="Bruce D."/>
            <person name="Han C."/>
            <person name="Schmutz J."/>
            <person name="Larimer F."/>
            <person name="Land M."/>
            <person name="Hauser L."/>
            <person name="Kyrpides N."/>
            <person name="Lykidis A."/>
            <person name="van de Werken H.J.G."/>
            <person name="Verhaart M.R.A."/>
            <person name="VanFossen A.L."/>
            <person name="Lewis D.L."/>
            <person name="Nichols J.D."/>
            <person name="Goorissen H.P."/>
            <person name="van Niel E.W.J."/>
            <person name="Stams F.J.M."/>
            <person name="Willquist K.U."/>
            <person name="Ward D.E."/>
            <person name="van der Oost J."/>
            <person name="Kelly R.M."/>
            <person name="Kengen S.M.W."/>
            <person name="Richardson P."/>
        </authorList>
    </citation>
    <scope>NUCLEOTIDE SEQUENCE [LARGE SCALE GENOMIC DNA]</scope>
    <source>
        <strain>ATCC 43494 / DSM 8903 / Tp8T 6331</strain>
    </source>
</reference>
<comment type="similarity">
    <text evidence="1">Belongs to the bacterial ribosomal protein bL32 family.</text>
</comment>
<proteinExistence type="inferred from homology"/>
<keyword id="KW-0687">Ribonucleoprotein</keyword>
<keyword id="KW-0689">Ribosomal protein</keyword>
<organism>
    <name type="scientific">Caldicellulosiruptor saccharolyticus (strain ATCC 43494 / DSM 8903 / Tp8T 6331)</name>
    <dbReference type="NCBI Taxonomy" id="351627"/>
    <lineage>
        <taxon>Bacteria</taxon>
        <taxon>Bacillati</taxon>
        <taxon>Bacillota</taxon>
        <taxon>Bacillota incertae sedis</taxon>
        <taxon>Caldicellulosiruptorales</taxon>
        <taxon>Caldicellulosiruptoraceae</taxon>
        <taxon>Caldicellulosiruptor</taxon>
    </lineage>
</organism>
<name>RL32_CALS8</name>
<evidence type="ECO:0000255" key="1">
    <source>
        <dbReference type="HAMAP-Rule" id="MF_00340"/>
    </source>
</evidence>
<evidence type="ECO:0000305" key="2"/>